<gene>
    <name evidence="1" type="primary">atpC</name>
    <name type="ordered locus">SPD_1334</name>
</gene>
<keyword id="KW-0066">ATP synthesis</keyword>
<keyword id="KW-1003">Cell membrane</keyword>
<keyword id="KW-0139">CF(1)</keyword>
<keyword id="KW-0375">Hydrogen ion transport</keyword>
<keyword id="KW-0406">Ion transport</keyword>
<keyword id="KW-0472">Membrane</keyword>
<keyword id="KW-1185">Reference proteome</keyword>
<keyword id="KW-0813">Transport</keyword>
<evidence type="ECO:0000255" key="1">
    <source>
        <dbReference type="HAMAP-Rule" id="MF_00530"/>
    </source>
</evidence>
<dbReference type="EMBL" id="CP000410">
    <property type="protein sequence ID" value="ABJ54693.1"/>
    <property type="molecule type" value="Genomic_DNA"/>
</dbReference>
<dbReference type="RefSeq" id="WP_000068050.1">
    <property type="nucleotide sequence ID" value="NZ_JAMLJR010000008.1"/>
</dbReference>
<dbReference type="SMR" id="Q04N64"/>
<dbReference type="PaxDb" id="373153-SPD_1334"/>
<dbReference type="KEGG" id="spd:SPD_1334"/>
<dbReference type="eggNOG" id="COG0355">
    <property type="taxonomic scope" value="Bacteria"/>
</dbReference>
<dbReference type="HOGENOM" id="CLU_084338_1_0_9"/>
<dbReference type="BioCyc" id="SPNE373153:G1G6V-1439-MONOMER"/>
<dbReference type="Proteomes" id="UP000001452">
    <property type="component" value="Chromosome"/>
</dbReference>
<dbReference type="GO" id="GO:0005886">
    <property type="term" value="C:plasma membrane"/>
    <property type="evidence" value="ECO:0007669"/>
    <property type="project" value="UniProtKB-SubCell"/>
</dbReference>
<dbReference type="GO" id="GO:0045259">
    <property type="term" value="C:proton-transporting ATP synthase complex"/>
    <property type="evidence" value="ECO:0007669"/>
    <property type="project" value="UniProtKB-KW"/>
</dbReference>
<dbReference type="GO" id="GO:0005524">
    <property type="term" value="F:ATP binding"/>
    <property type="evidence" value="ECO:0007669"/>
    <property type="project" value="UniProtKB-UniRule"/>
</dbReference>
<dbReference type="GO" id="GO:0046933">
    <property type="term" value="F:proton-transporting ATP synthase activity, rotational mechanism"/>
    <property type="evidence" value="ECO:0007669"/>
    <property type="project" value="UniProtKB-UniRule"/>
</dbReference>
<dbReference type="CDD" id="cd12152">
    <property type="entry name" value="F1-ATPase_delta"/>
    <property type="match status" value="1"/>
</dbReference>
<dbReference type="FunFam" id="1.20.5.440:FF:000001">
    <property type="entry name" value="ATP synthase epsilon chain"/>
    <property type="match status" value="1"/>
</dbReference>
<dbReference type="Gene3D" id="1.20.5.440">
    <property type="entry name" value="ATP synthase delta/epsilon subunit, C-terminal domain"/>
    <property type="match status" value="1"/>
</dbReference>
<dbReference type="Gene3D" id="2.60.15.10">
    <property type="entry name" value="F0F1 ATP synthase delta/epsilon subunit, N-terminal"/>
    <property type="match status" value="1"/>
</dbReference>
<dbReference type="HAMAP" id="MF_00530">
    <property type="entry name" value="ATP_synth_epsil_bac"/>
    <property type="match status" value="1"/>
</dbReference>
<dbReference type="InterPro" id="IPR001469">
    <property type="entry name" value="ATP_synth_F1_dsu/esu"/>
</dbReference>
<dbReference type="InterPro" id="IPR020546">
    <property type="entry name" value="ATP_synth_F1_dsu/esu_N"/>
</dbReference>
<dbReference type="InterPro" id="IPR020547">
    <property type="entry name" value="ATP_synth_F1_esu_C"/>
</dbReference>
<dbReference type="InterPro" id="IPR036771">
    <property type="entry name" value="ATPsynth_dsu/esu_N"/>
</dbReference>
<dbReference type="NCBIfam" id="TIGR01216">
    <property type="entry name" value="ATP_synt_epsi"/>
    <property type="match status" value="1"/>
</dbReference>
<dbReference type="NCBIfam" id="NF001846">
    <property type="entry name" value="PRK00571.1-3"/>
    <property type="match status" value="1"/>
</dbReference>
<dbReference type="PANTHER" id="PTHR13822">
    <property type="entry name" value="ATP SYNTHASE DELTA/EPSILON CHAIN"/>
    <property type="match status" value="1"/>
</dbReference>
<dbReference type="PANTHER" id="PTHR13822:SF10">
    <property type="entry name" value="ATP SYNTHASE EPSILON CHAIN, CHLOROPLASTIC"/>
    <property type="match status" value="1"/>
</dbReference>
<dbReference type="Pfam" id="PF00401">
    <property type="entry name" value="ATP-synt_DE"/>
    <property type="match status" value="1"/>
</dbReference>
<dbReference type="Pfam" id="PF02823">
    <property type="entry name" value="ATP-synt_DE_N"/>
    <property type="match status" value="1"/>
</dbReference>
<dbReference type="SUPFAM" id="SSF51344">
    <property type="entry name" value="Epsilon subunit of F1F0-ATP synthase N-terminal domain"/>
    <property type="match status" value="1"/>
</dbReference>
<feature type="chain" id="PRO_1000056540" description="ATP synthase epsilon chain">
    <location>
        <begin position="1"/>
        <end position="139"/>
    </location>
</feature>
<comment type="function">
    <text evidence="1">Produces ATP from ADP in the presence of a proton gradient across the membrane.</text>
</comment>
<comment type="subunit">
    <text evidence="1">F-type ATPases have 2 components, CF(1) - the catalytic core - and CF(0) - the membrane proton channel. CF(1) has five subunits: alpha(3), beta(3), gamma(1), delta(1), epsilon(1). CF(0) has three main subunits: a, b and c.</text>
</comment>
<comment type="subcellular location">
    <subcellularLocation>
        <location evidence="1">Cell membrane</location>
        <topology evidence="1">Peripheral membrane protein</topology>
    </subcellularLocation>
</comment>
<comment type="similarity">
    <text evidence="1">Belongs to the ATPase epsilon chain family.</text>
</comment>
<accession>Q04N64</accession>
<organism>
    <name type="scientific">Streptococcus pneumoniae serotype 2 (strain D39 / NCTC 7466)</name>
    <dbReference type="NCBI Taxonomy" id="373153"/>
    <lineage>
        <taxon>Bacteria</taxon>
        <taxon>Bacillati</taxon>
        <taxon>Bacillota</taxon>
        <taxon>Bacilli</taxon>
        <taxon>Lactobacillales</taxon>
        <taxon>Streptococcaceae</taxon>
        <taxon>Streptococcus</taxon>
    </lineage>
</organism>
<proteinExistence type="inferred from homology"/>
<reference key="1">
    <citation type="journal article" date="2007" name="J. Bacteriol.">
        <title>Genome sequence of Avery's virulent serotype 2 strain D39 of Streptococcus pneumoniae and comparison with that of unencapsulated laboratory strain R6.</title>
        <authorList>
            <person name="Lanie J.A."/>
            <person name="Ng W.-L."/>
            <person name="Kazmierczak K.M."/>
            <person name="Andrzejewski T.M."/>
            <person name="Davidsen T.M."/>
            <person name="Wayne K.J."/>
            <person name="Tettelin H."/>
            <person name="Glass J.I."/>
            <person name="Winkler M.E."/>
        </authorList>
    </citation>
    <scope>NUCLEOTIDE SEQUENCE [LARGE SCALE GENOMIC DNA]</scope>
    <source>
        <strain>D39 / NCTC 7466</strain>
    </source>
</reference>
<name>ATPE_STRP2</name>
<sequence length="139" mass="15638">MAQLTVQIVTPDGLVYDHHASYVSVRTLDGEMGILPRHENMIAVLAVDEVKVKRIDDKDHVNWIAVNGGVIEIANDMITIVADSAERARDIDISRAERAKLRAERAIEEAQDKHLIDQERRAKIALQRAINRINVGNRL</sequence>
<protein>
    <recommendedName>
        <fullName evidence="1">ATP synthase epsilon chain</fullName>
    </recommendedName>
    <alternativeName>
        <fullName evidence="1">ATP synthase F1 sector epsilon subunit</fullName>
    </alternativeName>
    <alternativeName>
        <fullName evidence="1">F-ATPase epsilon subunit</fullName>
    </alternativeName>
</protein>